<feature type="chain" id="PRO_0000138925" description="Protease HtpX homolog">
    <location>
        <begin position="1"/>
        <end position="289"/>
    </location>
</feature>
<feature type="transmembrane region" description="Helical" evidence="1">
    <location>
        <begin position="5"/>
        <end position="27"/>
    </location>
</feature>
<feature type="transmembrane region" description="Helical" evidence="1">
    <location>
        <begin position="40"/>
        <end position="60"/>
    </location>
</feature>
<feature type="transmembrane region" description="Helical" evidence="1">
    <location>
        <begin position="143"/>
        <end position="163"/>
    </location>
</feature>
<feature type="transmembrane region" description="Helical" evidence="1">
    <location>
        <begin position="181"/>
        <end position="201"/>
    </location>
</feature>
<feature type="active site" evidence="1">
    <location>
        <position position="134"/>
    </location>
</feature>
<feature type="binding site" evidence="1">
    <location>
        <position position="133"/>
    </location>
    <ligand>
        <name>Zn(2+)</name>
        <dbReference type="ChEBI" id="CHEBI:29105"/>
        <note>catalytic</note>
    </ligand>
</feature>
<feature type="binding site" evidence="1">
    <location>
        <position position="137"/>
    </location>
    <ligand>
        <name>Zn(2+)</name>
        <dbReference type="ChEBI" id="CHEBI:29105"/>
        <note>catalytic</note>
    </ligand>
</feature>
<feature type="binding site" evidence="1">
    <location>
        <position position="207"/>
    </location>
    <ligand>
        <name>Zn(2+)</name>
        <dbReference type="ChEBI" id="CHEBI:29105"/>
        <note>catalytic</note>
    </ligand>
</feature>
<accession>Q8U1S0</accession>
<keyword id="KW-1003">Cell membrane</keyword>
<keyword id="KW-0378">Hydrolase</keyword>
<keyword id="KW-0472">Membrane</keyword>
<keyword id="KW-0479">Metal-binding</keyword>
<keyword id="KW-0482">Metalloprotease</keyword>
<keyword id="KW-0645">Protease</keyword>
<keyword id="KW-1185">Reference proteome</keyword>
<keyword id="KW-0812">Transmembrane</keyword>
<keyword id="KW-1133">Transmembrane helix</keyword>
<keyword id="KW-0862">Zinc</keyword>
<protein>
    <recommendedName>
        <fullName evidence="1">Protease HtpX homolog</fullName>
        <ecNumber evidence="1">3.4.24.-</ecNumber>
    </recommendedName>
</protein>
<organism>
    <name type="scientific">Pyrococcus furiosus (strain ATCC 43587 / DSM 3638 / JCM 8422 / Vc1)</name>
    <dbReference type="NCBI Taxonomy" id="186497"/>
    <lineage>
        <taxon>Archaea</taxon>
        <taxon>Methanobacteriati</taxon>
        <taxon>Methanobacteriota</taxon>
        <taxon>Thermococci</taxon>
        <taxon>Thermococcales</taxon>
        <taxon>Thermococcaceae</taxon>
        <taxon>Pyrococcus</taxon>
    </lineage>
</organism>
<sequence length="289" mass="31802">MGIGLWVRTGLLMAFLTGLLVGIGYLIGGQGGMIIAFTIALFMNFFSYWFSDSIVLSWYNARIVSEEEAPELHRIVEKLAMQAGIPKPRVAIVPTLVPNAFATGRSPEHAVVAVTEGLLRILNRDELEGVIAHEISHIKNRDTLIQTIAAVLAGAIMVLVNFARWSLWFGAYDEDRDGGNIVALILAIILAPIAATLIQLAISRSREYLADETGAKISGKPHALASALMKIEEAVRYRPLKNGNPATAHMFIVNPFRGVDFVELFSTHPPTEKRIERLRKIAMEMGIIF</sequence>
<comment type="cofactor">
    <cofactor evidence="1">
        <name>Zn(2+)</name>
        <dbReference type="ChEBI" id="CHEBI:29105"/>
    </cofactor>
    <text evidence="1">Binds 1 zinc ion per subunit.</text>
</comment>
<comment type="subcellular location">
    <subcellularLocation>
        <location evidence="1">Cell membrane</location>
        <topology evidence="1">Multi-pass membrane protein</topology>
    </subcellularLocation>
</comment>
<comment type="similarity">
    <text evidence="1">Belongs to the peptidase M48B family.</text>
</comment>
<name>HTPX_PYRFU</name>
<evidence type="ECO:0000255" key="1">
    <source>
        <dbReference type="HAMAP-Rule" id="MF_00188"/>
    </source>
</evidence>
<gene>
    <name evidence="1" type="primary">htpX</name>
    <name type="ordered locus">PF1135</name>
</gene>
<reference key="1">
    <citation type="journal article" date="1999" name="Genetics">
        <title>Divergence of the hyperthermophilic archaea Pyrococcus furiosus and P. horikoshii inferred from complete genomic sequences.</title>
        <authorList>
            <person name="Maeder D.L."/>
            <person name="Weiss R.B."/>
            <person name="Dunn D.M."/>
            <person name="Cherry J.L."/>
            <person name="Gonzalez J.M."/>
            <person name="DiRuggiero J."/>
            <person name="Robb F.T."/>
        </authorList>
    </citation>
    <scope>NUCLEOTIDE SEQUENCE [LARGE SCALE GENOMIC DNA]</scope>
    <source>
        <strain>ATCC 43587 / DSM 3638 / JCM 8422 / Vc1</strain>
    </source>
</reference>
<proteinExistence type="inferred from homology"/>
<dbReference type="EC" id="3.4.24.-" evidence="1"/>
<dbReference type="EMBL" id="AE009950">
    <property type="protein sequence ID" value="AAL81259.1"/>
    <property type="molecule type" value="Genomic_DNA"/>
</dbReference>
<dbReference type="RefSeq" id="WP_011012275.1">
    <property type="nucleotide sequence ID" value="NZ_CP023154.1"/>
</dbReference>
<dbReference type="STRING" id="186497.PF1135"/>
<dbReference type="PaxDb" id="186497-PF1135"/>
<dbReference type="GeneID" id="41712944"/>
<dbReference type="KEGG" id="pfu:PF1135"/>
<dbReference type="PATRIC" id="fig|186497.12.peg.1196"/>
<dbReference type="eggNOG" id="arCOG01331">
    <property type="taxonomic scope" value="Archaea"/>
</dbReference>
<dbReference type="HOGENOM" id="CLU_042266_3_0_2"/>
<dbReference type="OrthoDB" id="28389at2157"/>
<dbReference type="PhylomeDB" id="Q8U1S0"/>
<dbReference type="Proteomes" id="UP000001013">
    <property type="component" value="Chromosome"/>
</dbReference>
<dbReference type="GO" id="GO:0005886">
    <property type="term" value="C:plasma membrane"/>
    <property type="evidence" value="ECO:0007669"/>
    <property type="project" value="UniProtKB-SubCell"/>
</dbReference>
<dbReference type="GO" id="GO:0004222">
    <property type="term" value="F:metalloendopeptidase activity"/>
    <property type="evidence" value="ECO:0007669"/>
    <property type="project" value="UniProtKB-UniRule"/>
</dbReference>
<dbReference type="GO" id="GO:0008270">
    <property type="term" value="F:zinc ion binding"/>
    <property type="evidence" value="ECO:0007669"/>
    <property type="project" value="UniProtKB-UniRule"/>
</dbReference>
<dbReference type="GO" id="GO:0006508">
    <property type="term" value="P:proteolysis"/>
    <property type="evidence" value="ECO:0007669"/>
    <property type="project" value="UniProtKB-KW"/>
</dbReference>
<dbReference type="CDD" id="cd07336">
    <property type="entry name" value="M48B_HtpX_like"/>
    <property type="match status" value="1"/>
</dbReference>
<dbReference type="Gene3D" id="3.30.2010.10">
    <property type="entry name" value="Metalloproteases ('zincins'), catalytic domain"/>
    <property type="match status" value="1"/>
</dbReference>
<dbReference type="HAMAP" id="MF_00188">
    <property type="entry name" value="Pept_M48_protease_HtpX"/>
    <property type="match status" value="1"/>
</dbReference>
<dbReference type="InterPro" id="IPR050083">
    <property type="entry name" value="HtpX_protease"/>
</dbReference>
<dbReference type="InterPro" id="IPR022919">
    <property type="entry name" value="Pept_M48_protease_HtpX"/>
</dbReference>
<dbReference type="InterPro" id="IPR001915">
    <property type="entry name" value="Peptidase_M48"/>
</dbReference>
<dbReference type="NCBIfam" id="NF002826">
    <property type="entry name" value="PRK03001.1"/>
    <property type="match status" value="1"/>
</dbReference>
<dbReference type="PANTHER" id="PTHR43221">
    <property type="entry name" value="PROTEASE HTPX"/>
    <property type="match status" value="1"/>
</dbReference>
<dbReference type="PANTHER" id="PTHR43221:SF2">
    <property type="entry name" value="PROTEASE HTPX HOMOLOG"/>
    <property type="match status" value="1"/>
</dbReference>
<dbReference type="Pfam" id="PF01435">
    <property type="entry name" value="Peptidase_M48"/>
    <property type="match status" value="1"/>
</dbReference>